<evidence type="ECO:0000255" key="1">
    <source>
        <dbReference type="PROSITE-ProRule" id="PRU00457"/>
    </source>
</evidence>
<evidence type="ECO:0000256" key="2">
    <source>
        <dbReference type="SAM" id="MobiDB-lite"/>
    </source>
</evidence>
<evidence type="ECO:0000305" key="3"/>
<reference key="1">
    <citation type="journal article" date="2010" name="J. Bacteriol.">
        <title>Massive gene duplication event among clinical isolates of the Mycobacterium tuberculosis W/Beijing family.</title>
        <authorList>
            <person name="Domenech P."/>
            <person name="Kolly G.S."/>
            <person name="Leon-Solis L."/>
            <person name="Fallow A."/>
            <person name="Reed M.B."/>
        </authorList>
    </citation>
    <scope>NUCLEOTIDE SEQUENCE [GENOMIC DNA]</scope>
    <source>
        <strain>G4B1.2</strain>
    </source>
</reference>
<reference key="2">
    <citation type="journal article" date="1998" name="Nature">
        <title>Deciphering the biology of Mycobacterium tuberculosis from the complete genome sequence.</title>
        <authorList>
            <person name="Cole S.T."/>
            <person name="Brosch R."/>
            <person name="Parkhill J."/>
            <person name="Garnier T."/>
            <person name="Churcher C.M."/>
            <person name="Harris D.E."/>
            <person name="Gordon S.V."/>
            <person name="Eiglmeier K."/>
            <person name="Gas S."/>
            <person name="Barry C.E. III"/>
            <person name="Tekaia F."/>
            <person name="Badcock K."/>
            <person name="Basham D."/>
            <person name="Brown D."/>
            <person name="Chillingworth T."/>
            <person name="Connor R."/>
            <person name="Davies R.M."/>
            <person name="Devlin K."/>
            <person name="Feltwell T."/>
            <person name="Gentles S."/>
            <person name="Hamlin N."/>
            <person name="Holroyd S."/>
            <person name="Hornsby T."/>
            <person name="Jagels K."/>
            <person name="Krogh A."/>
            <person name="McLean J."/>
            <person name="Moule S."/>
            <person name="Murphy L.D."/>
            <person name="Oliver S."/>
            <person name="Osborne J."/>
            <person name="Quail M.A."/>
            <person name="Rajandream M.A."/>
            <person name="Rogers J."/>
            <person name="Rutter S."/>
            <person name="Seeger K."/>
            <person name="Skelton S."/>
            <person name="Squares S."/>
            <person name="Squares R."/>
            <person name="Sulston J.E."/>
            <person name="Taylor K."/>
            <person name="Whitehead S."/>
            <person name="Barrell B.G."/>
        </authorList>
    </citation>
    <scope>NUCLEOTIDE SEQUENCE [LARGE SCALE GENOMIC DNA]</scope>
    <source>
        <strain>ATCC 25618 / H37Rv</strain>
    </source>
</reference>
<sequence>MATIAQRLRDDHGVAASESSVRRWIATHFAEEVARERVTVPRGPVDAGSEAQIDYGRLGMWFDPATARRVAVWAFVMVLAFSRHLFVRPVIRMDQTAWCACHVAAFEFFDGVPARLVCDNLRTGVDKPDLYDPQINRSYAELASHYATLVDPARARKPKDKPRVERPMTYVRDSFWKGREFDSLAQMQQAAVTWSTEVAGLRYLRALEGAQPLRMFEAVEQQALIALPPRAFELTSWSIGTVGVDTHLKVGKALYSVPWRLIGQRLHARTAGDVVQIFAGNDVVATHVRRPSGRSTDFSHYPPEKIAFHMRTPTWCRHTAELVGPASQQVIAEFMRDNAIHHLRSAQGVLGLRDKHGCDRLEAACARAIEVGDPSYRTIKGILVAGTEHAANEPTTSSPASTAGGVPARP</sequence>
<comment type="similarity">
    <text evidence="3">Belongs to the transposase IS21/IS408/IS1162 family.</text>
</comment>
<dbReference type="EMBL" id="HM053707">
    <property type="protein sequence ID" value="ADM62329.1"/>
    <property type="molecule type" value="Genomic_DNA"/>
</dbReference>
<dbReference type="EMBL" id="AL123456">
    <property type="protein sequence ID" value="CCP46250.1"/>
    <property type="molecule type" value="Genomic_DNA"/>
</dbReference>
<dbReference type="PIR" id="A70739">
    <property type="entry name" value="A70739"/>
</dbReference>
<dbReference type="RefSeq" id="NP_217945.1">
    <property type="nucleotide sequence ID" value="NC_000962.3"/>
</dbReference>
<dbReference type="RefSeq" id="WP_003917171.1">
    <property type="nucleotide sequence ID" value="NC_000962.3"/>
</dbReference>
<dbReference type="SMR" id="Q50700"/>
<dbReference type="STRING" id="83332.Rv3428c"/>
<dbReference type="PaxDb" id="83332-Rv3428c"/>
<dbReference type="DNASU" id="887621"/>
<dbReference type="GeneID" id="887621"/>
<dbReference type="KEGG" id="mtu:Rv3428c"/>
<dbReference type="KEGG" id="mtv:RVBD_3428c"/>
<dbReference type="TubercuList" id="Rv3428c"/>
<dbReference type="eggNOG" id="COG4584">
    <property type="taxonomic scope" value="Bacteria"/>
</dbReference>
<dbReference type="InParanoid" id="Q50700"/>
<dbReference type="OrthoDB" id="3542865at2"/>
<dbReference type="PhylomeDB" id="Q50700"/>
<dbReference type="Proteomes" id="UP000001584">
    <property type="component" value="Chromosome"/>
</dbReference>
<dbReference type="GO" id="GO:0005576">
    <property type="term" value="C:extracellular region"/>
    <property type="evidence" value="ECO:0007005"/>
    <property type="project" value="MTBBASE"/>
</dbReference>
<dbReference type="GO" id="GO:0005886">
    <property type="term" value="C:plasma membrane"/>
    <property type="evidence" value="ECO:0007005"/>
    <property type="project" value="MTBBASE"/>
</dbReference>
<dbReference type="GO" id="GO:0003676">
    <property type="term" value="F:nucleic acid binding"/>
    <property type="evidence" value="ECO:0007669"/>
    <property type="project" value="InterPro"/>
</dbReference>
<dbReference type="GO" id="GO:0015074">
    <property type="term" value="P:DNA integration"/>
    <property type="evidence" value="ECO:0007669"/>
    <property type="project" value="InterPro"/>
</dbReference>
<dbReference type="Gene3D" id="3.30.420.10">
    <property type="entry name" value="Ribonuclease H-like superfamily/Ribonuclease H"/>
    <property type="match status" value="1"/>
</dbReference>
<dbReference type="InterPro" id="IPR001584">
    <property type="entry name" value="Integrase_cat-core"/>
</dbReference>
<dbReference type="InterPro" id="IPR054353">
    <property type="entry name" value="IstA-like_C"/>
</dbReference>
<dbReference type="InterPro" id="IPR012337">
    <property type="entry name" value="RNaseH-like_sf"/>
</dbReference>
<dbReference type="InterPro" id="IPR036397">
    <property type="entry name" value="RNaseH_sf"/>
</dbReference>
<dbReference type="NCBIfam" id="NF033546">
    <property type="entry name" value="transpos_IS21"/>
    <property type="match status" value="1"/>
</dbReference>
<dbReference type="PANTHER" id="PTHR35004">
    <property type="entry name" value="TRANSPOSASE RV3428C-RELATED"/>
    <property type="match status" value="1"/>
</dbReference>
<dbReference type="PANTHER" id="PTHR35004:SF8">
    <property type="entry name" value="TRANSPOSASE RV3428C-RELATED"/>
    <property type="match status" value="1"/>
</dbReference>
<dbReference type="Pfam" id="PF22483">
    <property type="entry name" value="Mu-transpos_C_2"/>
    <property type="match status" value="1"/>
</dbReference>
<dbReference type="Pfam" id="PF00665">
    <property type="entry name" value="rve"/>
    <property type="match status" value="1"/>
</dbReference>
<dbReference type="SUPFAM" id="SSF53098">
    <property type="entry name" value="Ribonuclease H-like"/>
    <property type="match status" value="1"/>
</dbReference>
<dbReference type="PROSITE" id="PS50994">
    <property type="entry name" value="INTEGRASE"/>
    <property type="match status" value="1"/>
</dbReference>
<proteinExistence type="inferred from homology"/>
<protein>
    <recommendedName>
        <fullName>Putative transposase Rv3428c</fullName>
    </recommendedName>
</protein>
<keyword id="KW-1185">Reference proteome</keyword>
<keyword id="KW-0814">Transposable element</keyword>
<feature type="chain" id="PRO_0000075471" description="Putative transposase Rv3428c">
    <location>
        <begin position="1"/>
        <end position="410"/>
    </location>
</feature>
<feature type="domain" description="Integrase catalytic" evidence="1">
    <location>
        <begin position="40"/>
        <end position="220"/>
    </location>
</feature>
<feature type="region of interest" description="Disordered" evidence="2">
    <location>
        <begin position="390"/>
        <end position="410"/>
    </location>
</feature>
<gene>
    <name type="ordered locus">Rv3428c</name>
    <name type="ORF">MTCY78.01</name>
</gene>
<accession>Q50700</accession>
<accession>E0YJL0</accession>
<name>Y3428_MYCTU</name>
<organism>
    <name type="scientific">Mycobacterium tuberculosis (strain ATCC 25618 / H37Rv)</name>
    <dbReference type="NCBI Taxonomy" id="83332"/>
    <lineage>
        <taxon>Bacteria</taxon>
        <taxon>Bacillati</taxon>
        <taxon>Actinomycetota</taxon>
        <taxon>Actinomycetes</taxon>
        <taxon>Mycobacteriales</taxon>
        <taxon>Mycobacteriaceae</taxon>
        <taxon>Mycobacterium</taxon>
        <taxon>Mycobacterium tuberculosis complex</taxon>
    </lineage>
</organism>